<evidence type="ECO:0000250" key="1">
    <source>
        <dbReference type="UniProtKB" id="Q970U6"/>
    </source>
</evidence>
<evidence type="ECO:0000255" key="2">
    <source>
        <dbReference type="PROSITE-ProRule" id="PRU00409"/>
    </source>
</evidence>
<evidence type="ECO:0000269" key="3">
    <source>
    </source>
</evidence>
<evidence type="ECO:0000303" key="4">
    <source>
    </source>
</evidence>
<evidence type="ECO:0000305" key="5"/>
<evidence type="ECO:0000305" key="6">
    <source>
    </source>
</evidence>
<accession>Q4J8E7</accession>
<feature type="chain" id="PRO_0000422991" description="Glutamate--LysW ligase ArgX">
    <location>
        <begin position="1"/>
        <end position="282"/>
    </location>
</feature>
<feature type="domain" description="ATP-grasp" evidence="2">
    <location>
        <begin position="91"/>
        <end position="277"/>
    </location>
</feature>
<feature type="short sequence motif" description="GF motif that is essential for ArgX substrate specificity" evidence="6">
    <location>
        <begin position="259"/>
        <end position="260"/>
    </location>
</feature>
<feature type="binding site" evidence="1">
    <location>
        <position position="87"/>
    </location>
    <ligand>
        <name>ATP</name>
        <dbReference type="ChEBI" id="CHEBI:30616"/>
    </ligand>
</feature>
<feature type="binding site" evidence="1">
    <location>
        <position position="127"/>
    </location>
    <ligand>
        <name>ATP</name>
        <dbReference type="ChEBI" id="CHEBI:30616"/>
    </ligand>
</feature>
<feature type="binding site" evidence="2">
    <location>
        <begin position="131"/>
        <end position="137"/>
    </location>
    <ligand>
        <name>ATP</name>
        <dbReference type="ChEBI" id="CHEBI:30616"/>
    </ligand>
</feature>
<feature type="binding site" evidence="2">
    <location>
        <begin position="167"/>
        <end position="178"/>
    </location>
    <ligand>
        <name>ATP</name>
        <dbReference type="ChEBI" id="CHEBI:30616"/>
    </ligand>
</feature>
<feature type="binding site" evidence="1">
    <location>
        <position position="192"/>
    </location>
    <ligand>
        <name>substrate</name>
    </ligand>
</feature>
<feature type="binding site" evidence="1">
    <location>
        <position position="202"/>
    </location>
    <ligand>
        <name>ATP</name>
        <dbReference type="ChEBI" id="CHEBI:30616"/>
    </ligand>
</feature>
<feature type="binding site" evidence="1">
    <location>
        <begin position="203"/>
        <end position="204"/>
    </location>
    <ligand>
        <name>substrate</name>
    </ligand>
</feature>
<feature type="binding site" evidence="1">
    <location>
        <position position="237"/>
    </location>
    <ligand>
        <name>Mg(2+)</name>
        <dbReference type="ChEBI" id="CHEBI:18420"/>
        <label>1</label>
    </ligand>
</feature>
<feature type="binding site" evidence="1">
    <location>
        <position position="250"/>
    </location>
    <ligand>
        <name>Mg(2+)</name>
        <dbReference type="ChEBI" id="CHEBI:18420"/>
        <label>1</label>
    </ligand>
</feature>
<feature type="binding site" evidence="1">
    <location>
        <position position="250"/>
    </location>
    <ligand>
        <name>Mg(2+)</name>
        <dbReference type="ChEBI" id="CHEBI:18420"/>
        <label>2</label>
    </ligand>
</feature>
<feature type="binding site" evidence="1">
    <location>
        <position position="252"/>
    </location>
    <ligand>
        <name>Mg(2+)</name>
        <dbReference type="ChEBI" id="CHEBI:18420"/>
        <label>2</label>
    </ligand>
</feature>
<feature type="binding site" evidence="1">
    <location>
        <begin position="256"/>
        <end position="260"/>
    </location>
    <ligand>
        <name>substrate</name>
    </ligand>
</feature>
<sequence length="282" mass="31715">MRVALVVDIVRQEEKLIAKALEKFQLQYDVINVAQEPLPFNKALGRYDVAIIRPISMYRALYASAVLESAGVHTINSSDTISLCGDKILTYSKLYREGIPIPDSIIAMSSDAALKAYEQKGFPLIDKPPIGSWGRLVSLIRDIFEGKTIIEHRELMGNSALKVHIVQEYINYKSRDIRCIVIGSELLGCYARNIPSNEWRANIALGGYPSQIEVDHKLKETVLKATSIIGGEFVSIDVMEHQSKNYVINEFNDVPEFKGFMLATNIDVAEELVSYVKNNYLR</sequence>
<protein>
    <recommendedName>
        <fullName evidence="5">Glutamate--LysW ligase ArgX</fullName>
        <ecNumber evidence="3">6.3.2.-</ecNumber>
    </recommendedName>
</protein>
<organism>
    <name type="scientific">Sulfolobus acidocaldarius (strain ATCC 33909 / DSM 639 / JCM 8929 / NBRC 15157 / NCIMB 11770)</name>
    <dbReference type="NCBI Taxonomy" id="330779"/>
    <lineage>
        <taxon>Archaea</taxon>
        <taxon>Thermoproteota</taxon>
        <taxon>Thermoprotei</taxon>
        <taxon>Sulfolobales</taxon>
        <taxon>Sulfolobaceae</taxon>
        <taxon>Sulfolobus</taxon>
    </lineage>
</organism>
<proteinExistence type="evidence at protein level"/>
<name>ARGX_SULAC</name>
<gene>
    <name evidence="4" type="primary">argX</name>
    <name type="ordered locus">Saci_1621</name>
</gene>
<reference key="1">
    <citation type="journal article" date="2005" name="J. Bacteriol.">
        <title>The genome of Sulfolobus acidocaldarius, a model organism of the Crenarchaeota.</title>
        <authorList>
            <person name="Chen L."/>
            <person name="Bruegger K."/>
            <person name="Skovgaard M."/>
            <person name="Redder P."/>
            <person name="She Q."/>
            <person name="Torarinsson E."/>
            <person name="Greve B."/>
            <person name="Awayez M."/>
            <person name="Zibat A."/>
            <person name="Klenk H.-P."/>
            <person name="Garrett R.A."/>
        </authorList>
    </citation>
    <scope>NUCLEOTIDE SEQUENCE [LARGE SCALE GENOMIC DNA]</scope>
    <source>
        <strain>ATCC 33909 / DSM 639 / JCM 8929 / NBRC 15157 / NCIMB 11770</strain>
    </source>
</reference>
<reference key="2">
    <citation type="journal article" date="2013" name="Nat. Chem. Biol.">
        <title>Lysine and arginine biosyntheses mediated by a common carrier protein in Sulfolobus.</title>
        <authorList>
            <person name="Ouchi T."/>
            <person name="Tomita T."/>
            <person name="Horie A."/>
            <person name="Yoshida A."/>
            <person name="Takahashi K."/>
            <person name="Nishida H."/>
            <person name="Lassak K."/>
            <person name="Taka H."/>
            <person name="Mineki R."/>
            <person name="Fujimura T."/>
            <person name="Kosono S."/>
            <person name="Nishiyama C."/>
            <person name="Masui R."/>
            <person name="Kuramitsu S."/>
            <person name="Albers S.V."/>
            <person name="Kuzuyama T."/>
            <person name="Nishiyama M."/>
        </authorList>
    </citation>
    <scope>CATALYTIC ACTIVITY</scope>
    <scope>FUNCTION</scope>
    <scope>DISRUPTION PHENOTYPE</scope>
    <scope>PATHWAY</scope>
</reference>
<keyword id="KW-0028">Amino-acid biosynthesis</keyword>
<keyword id="KW-0055">Arginine biosynthesis</keyword>
<keyword id="KW-0067">ATP-binding</keyword>
<keyword id="KW-0436">Ligase</keyword>
<keyword id="KW-0460">Magnesium</keyword>
<keyword id="KW-0479">Metal-binding</keyword>
<keyword id="KW-0547">Nucleotide-binding</keyword>
<keyword id="KW-1185">Reference proteome</keyword>
<dbReference type="EC" id="6.3.2.-" evidence="3"/>
<dbReference type="EMBL" id="CP000077">
    <property type="protein sequence ID" value="AAY80933.1"/>
    <property type="molecule type" value="Genomic_DNA"/>
</dbReference>
<dbReference type="RefSeq" id="WP_011278435.1">
    <property type="nucleotide sequence ID" value="NC_007181.1"/>
</dbReference>
<dbReference type="SMR" id="Q4J8E7"/>
<dbReference type="STRING" id="330779.Saci_1621"/>
<dbReference type="GeneID" id="14552114"/>
<dbReference type="KEGG" id="sai:Saci_1621"/>
<dbReference type="PATRIC" id="fig|330779.12.peg.1560"/>
<dbReference type="eggNOG" id="arCOG01589">
    <property type="taxonomic scope" value="Archaea"/>
</dbReference>
<dbReference type="HOGENOM" id="CLU_054353_2_1_2"/>
<dbReference type="BioCyc" id="MetaCyc:MONOMER-18311"/>
<dbReference type="BRENDA" id="6.3.2.60">
    <property type="organism ID" value="6160"/>
</dbReference>
<dbReference type="BRENDA" id="6.3.2.B19">
    <property type="organism ID" value="6160"/>
</dbReference>
<dbReference type="UniPathway" id="UPA00068"/>
<dbReference type="Proteomes" id="UP000001018">
    <property type="component" value="Chromosome"/>
</dbReference>
<dbReference type="GO" id="GO:0005737">
    <property type="term" value="C:cytoplasm"/>
    <property type="evidence" value="ECO:0007669"/>
    <property type="project" value="TreeGrafter"/>
</dbReference>
<dbReference type="GO" id="GO:0005524">
    <property type="term" value="F:ATP binding"/>
    <property type="evidence" value="ECO:0007669"/>
    <property type="project" value="UniProtKB-KW"/>
</dbReference>
<dbReference type="GO" id="GO:0043774">
    <property type="term" value="F:coenzyme F420-2 alpha-glutamyl ligase activity"/>
    <property type="evidence" value="ECO:0007669"/>
    <property type="project" value="TreeGrafter"/>
</dbReference>
<dbReference type="GO" id="GO:0046872">
    <property type="term" value="F:metal ion binding"/>
    <property type="evidence" value="ECO:0007669"/>
    <property type="project" value="UniProtKB-KW"/>
</dbReference>
<dbReference type="GO" id="GO:0006526">
    <property type="term" value="P:L-arginine biosynthetic process"/>
    <property type="evidence" value="ECO:0007669"/>
    <property type="project" value="UniProtKB-UniPathway"/>
</dbReference>
<dbReference type="GO" id="GO:0009085">
    <property type="term" value="P:lysine biosynthetic process"/>
    <property type="evidence" value="ECO:0007669"/>
    <property type="project" value="InterPro"/>
</dbReference>
<dbReference type="GO" id="GO:0036211">
    <property type="term" value="P:protein modification process"/>
    <property type="evidence" value="ECO:0007669"/>
    <property type="project" value="InterPro"/>
</dbReference>
<dbReference type="FunFam" id="3.30.1490.20:FF:000025">
    <property type="entry name" value="Alpha-aminoadipate--LysW ligase LysX protein"/>
    <property type="match status" value="1"/>
</dbReference>
<dbReference type="FunFam" id="3.30.470.20:FF:000058">
    <property type="entry name" value="Alpha-aminoadipate--LysW ligase LysX protein"/>
    <property type="match status" value="1"/>
</dbReference>
<dbReference type="FunFam" id="3.40.50.20:FF:000055">
    <property type="entry name" value="Glutamate--LysW ligase ArgX"/>
    <property type="match status" value="1"/>
</dbReference>
<dbReference type="Gene3D" id="3.40.50.20">
    <property type="match status" value="1"/>
</dbReference>
<dbReference type="Gene3D" id="3.30.1490.20">
    <property type="entry name" value="ATP-grasp fold, A domain"/>
    <property type="match status" value="1"/>
</dbReference>
<dbReference type="Gene3D" id="3.30.470.20">
    <property type="entry name" value="ATP-grasp fold, B domain"/>
    <property type="match status" value="1"/>
</dbReference>
<dbReference type="InterPro" id="IPR011761">
    <property type="entry name" value="ATP-grasp"/>
</dbReference>
<dbReference type="InterPro" id="IPR013651">
    <property type="entry name" value="ATP-grasp_RimK-type"/>
</dbReference>
<dbReference type="InterPro" id="IPR013815">
    <property type="entry name" value="ATP_grasp_subdomain_1"/>
</dbReference>
<dbReference type="InterPro" id="IPR054562">
    <property type="entry name" value="LysX/ArgX_preATP_grasp"/>
</dbReference>
<dbReference type="InterPro" id="IPR011870">
    <property type="entry name" value="LysX_arch"/>
</dbReference>
<dbReference type="InterPro" id="IPR016185">
    <property type="entry name" value="PreATP-grasp_dom_sf"/>
</dbReference>
<dbReference type="InterPro" id="IPR004666">
    <property type="entry name" value="Rp_bS6_RimK/Lys_biosynth_LsyX"/>
</dbReference>
<dbReference type="NCBIfam" id="TIGR02144">
    <property type="entry name" value="LysX_arch"/>
    <property type="match status" value="1"/>
</dbReference>
<dbReference type="NCBIfam" id="TIGR00768">
    <property type="entry name" value="rimK_fam"/>
    <property type="match status" value="1"/>
</dbReference>
<dbReference type="PANTHER" id="PTHR21621:SF2">
    <property type="entry name" value="COENZYME GAMMA-F420-2:ALPHA-L-GLUTAMATE LIGASE"/>
    <property type="match status" value="1"/>
</dbReference>
<dbReference type="PANTHER" id="PTHR21621">
    <property type="entry name" value="RIBOSOMAL PROTEIN S6 MODIFICATION PROTEIN"/>
    <property type="match status" value="1"/>
</dbReference>
<dbReference type="Pfam" id="PF22626">
    <property type="entry name" value="LysX_preATP_grasp"/>
    <property type="match status" value="1"/>
</dbReference>
<dbReference type="Pfam" id="PF08443">
    <property type="entry name" value="RimK"/>
    <property type="match status" value="1"/>
</dbReference>
<dbReference type="SUPFAM" id="SSF56059">
    <property type="entry name" value="Glutathione synthetase ATP-binding domain-like"/>
    <property type="match status" value="1"/>
</dbReference>
<dbReference type="SUPFAM" id="SSF52440">
    <property type="entry name" value="PreATP-grasp domain"/>
    <property type="match status" value="1"/>
</dbReference>
<dbReference type="PROSITE" id="PS50975">
    <property type="entry name" value="ATP_GRASP"/>
    <property type="match status" value="1"/>
</dbReference>
<comment type="function">
    <text evidence="3">Catalyzes the ATP-dependent formation of a covalent bond between the amino group of glutamate and the gamma-carboxyl group of the C-terminal glutamate residue in LysW.</text>
</comment>
<comment type="catalytic activity">
    <reaction evidence="3">
        <text>[amino-group carrier protein]-C-terminal-L-glutamate + L-glutamate + ATP = [amino-group carrier protein]-C-terminal-gamma-(L-glutamyl)-L-glutamate + ADP + phosphate + H(+)</text>
        <dbReference type="Rhea" id="RHEA:52624"/>
        <dbReference type="Rhea" id="RHEA-COMP:9693"/>
        <dbReference type="Rhea" id="RHEA-COMP:13311"/>
        <dbReference type="ChEBI" id="CHEBI:15378"/>
        <dbReference type="ChEBI" id="CHEBI:29985"/>
        <dbReference type="ChEBI" id="CHEBI:30616"/>
        <dbReference type="ChEBI" id="CHEBI:43474"/>
        <dbReference type="ChEBI" id="CHEBI:78525"/>
        <dbReference type="ChEBI" id="CHEBI:136714"/>
        <dbReference type="ChEBI" id="CHEBI:456216"/>
    </reaction>
</comment>
<comment type="cofactor">
    <cofactor evidence="1">
        <name>Mg(2+)</name>
        <dbReference type="ChEBI" id="CHEBI:18420"/>
    </cofactor>
    <text evidence="1">Binds 2 magnesium ions per subunit.</text>
</comment>
<comment type="pathway">
    <text evidence="3">Amino-acid biosynthesis; L-arginine biosynthesis.</text>
</comment>
<comment type="subunit">
    <text evidence="1">Homotetramer. Interacts with LysW.</text>
</comment>
<comment type="disruption phenotype">
    <text evidence="3">Cells lacking this gene require arginine for growth.</text>
</comment>
<comment type="similarity">
    <text evidence="5">Belongs to the RimK family. LysX subfamily.</text>
</comment>